<keyword id="KW-0004">4Fe-4S</keyword>
<keyword id="KW-0408">Iron</keyword>
<keyword id="KW-0411">Iron-sulfur</keyword>
<keyword id="KW-0456">Lyase</keyword>
<keyword id="KW-0479">Metal-binding</keyword>
<keyword id="KW-0949">S-adenosyl-L-methionine</keyword>
<keyword id="KW-0784">Thiamine biosynthesis</keyword>
<keyword id="KW-0862">Zinc</keyword>
<proteinExistence type="inferred from homology"/>
<feature type="chain" id="PRO_0000242302" description="Phosphomethylpyrimidine synthase">
    <location>
        <begin position="1"/>
        <end position="631"/>
    </location>
</feature>
<feature type="binding site" evidence="1">
    <location>
        <position position="239"/>
    </location>
    <ligand>
        <name>substrate</name>
    </ligand>
</feature>
<feature type="binding site" evidence="1">
    <location>
        <position position="268"/>
    </location>
    <ligand>
        <name>substrate</name>
    </ligand>
</feature>
<feature type="binding site" evidence="1">
    <location>
        <position position="297"/>
    </location>
    <ligand>
        <name>substrate</name>
    </ligand>
</feature>
<feature type="binding site" evidence="1">
    <location>
        <position position="333"/>
    </location>
    <ligand>
        <name>substrate</name>
    </ligand>
</feature>
<feature type="binding site" evidence="1">
    <location>
        <begin position="353"/>
        <end position="355"/>
    </location>
    <ligand>
        <name>substrate</name>
    </ligand>
</feature>
<feature type="binding site" evidence="1">
    <location>
        <begin position="394"/>
        <end position="397"/>
    </location>
    <ligand>
        <name>substrate</name>
    </ligand>
</feature>
<feature type="binding site" evidence="1">
    <location>
        <position position="433"/>
    </location>
    <ligand>
        <name>substrate</name>
    </ligand>
</feature>
<feature type="binding site" evidence="1">
    <location>
        <position position="437"/>
    </location>
    <ligand>
        <name>Zn(2+)</name>
        <dbReference type="ChEBI" id="CHEBI:29105"/>
    </ligand>
</feature>
<feature type="binding site" evidence="1">
    <location>
        <position position="460"/>
    </location>
    <ligand>
        <name>substrate</name>
    </ligand>
</feature>
<feature type="binding site" evidence="1">
    <location>
        <position position="501"/>
    </location>
    <ligand>
        <name>Zn(2+)</name>
        <dbReference type="ChEBI" id="CHEBI:29105"/>
    </ligand>
</feature>
<feature type="binding site" evidence="1">
    <location>
        <position position="581"/>
    </location>
    <ligand>
        <name>[4Fe-4S] cluster</name>
        <dbReference type="ChEBI" id="CHEBI:49883"/>
        <note>4Fe-4S-S-AdoMet</note>
    </ligand>
</feature>
<feature type="binding site" evidence="1">
    <location>
        <position position="584"/>
    </location>
    <ligand>
        <name>[4Fe-4S] cluster</name>
        <dbReference type="ChEBI" id="CHEBI:49883"/>
        <note>4Fe-4S-S-AdoMet</note>
    </ligand>
</feature>
<feature type="binding site" evidence="1">
    <location>
        <position position="589"/>
    </location>
    <ligand>
        <name>[4Fe-4S] cluster</name>
        <dbReference type="ChEBI" id="CHEBI:49883"/>
        <note>4Fe-4S-S-AdoMet</note>
    </ligand>
</feature>
<organism>
    <name type="scientific">Shigella boydii serotype 4 (strain Sb227)</name>
    <dbReference type="NCBI Taxonomy" id="300268"/>
    <lineage>
        <taxon>Bacteria</taxon>
        <taxon>Pseudomonadati</taxon>
        <taxon>Pseudomonadota</taxon>
        <taxon>Gammaproteobacteria</taxon>
        <taxon>Enterobacterales</taxon>
        <taxon>Enterobacteriaceae</taxon>
        <taxon>Shigella</taxon>
    </lineage>
</organism>
<accession>Q31U03</accession>
<protein>
    <recommendedName>
        <fullName evidence="1">Phosphomethylpyrimidine synthase</fullName>
        <ecNumber evidence="1">4.1.99.17</ecNumber>
    </recommendedName>
    <alternativeName>
        <fullName evidence="1">Hydroxymethylpyrimidine phosphate synthase</fullName>
        <shortName evidence="1">HMP-P synthase</shortName>
        <shortName evidence="1">HMP-phosphate synthase</shortName>
        <shortName evidence="1">HMPP synthase</shortName>
    </alternativeName>
    <alternativeName>
        <fullName evidence="1">Thiamine biosynthesis protein ThiC</fullName>
    </alternativeName>
</protein>
<dbReference type="EC" id="4.1.99.17" evidence="1"/>
<dbReference type="EMBL" id="CP000036">
    <property type="protein sequence ID" value="ABB68455.1"/>
    <property type="molecule type" value="Genomic_DNA"/>
</dbReference>
<dbReference type="RefSeq" id="WP_001276939.1">
    <property type="nucleotide sequence ID" value="NC_007613.1"/>
</dbReference>
<dbReference type="SMR" id="Q31U03"/>
<dbReference type="KEGG" id="sbo:SBO_4015"/>
<dbReference type="HOGENOM" id="CLU_013181_2_1_6"/>
<dbReference type="UniPathway" id="UPA00060"/>
<dbReference type="Proteomes" id="UP000007067">
    <property type="component" value="Chromosome"/>
</dbReference>
<dbReference type="GO" id="GO:0005829">
    <property type="term" value="C:cytosol"/>
    <property type="evidence" value="ECO:0007669"/>
    <property type="project" value="TreeGrafter"/>
</dbReference>
<dbReference type="GO" id="GO:0051539">
    <property type="term" value="F:4 iron, 4 sulfur cluster binding"/>
    <property type="evidence" value="ECO:0007669"/>
    <property type="project" value="UniProtKB-KW"/>
</dbReference>
<dbReference type="GO" id="GO:0016830">
    <property type="term" value="F:carbon-carbon lyase activity"/>
    <property type="evidence" value="ECO:0007669"/>
    <property type="project" value="InterPro"/>
</dbReference>
<dbReference type="GO" id="GO:0008270">
    <property type="term" value="F:zinc ion binding"/>
    <property type="evidence" value="ECO:0007669"/>
    <property type="project" value="UniProtKB-UniRule"/>
</dbReference>
<dbReference type="GO" id="GO:0009228">
    <property type="term" value="P:thiamine biosynthetic process"/>
    <property type="evidence" value="ECO:0007669"/>
    <property type="project" value="UniProtKB-KW"/>
</dbReference>
<dbReference type="GO" id="GO:0009229">
    <property type="term" value="P:thiamine diphosphate biosynthetic process"/>
    <property type="evidence" value="ECO:0007669"/>
    <property type="project" value="UniProtKB-UniRule"/>
</dbReference>
<dbReference type="FunFam" id="3.20.20.540:FF:000001">
    <property type="entry name" value="Phosphomethylpyrimidine synthase"/>
    <property type="match status" value="1"/>
</dbReference>
<dbReference type="Gene3D" id="6.10.250.620">
    <property type="match status" value="1"/>
</dbReference>
<dbReference type="Gene3D" id="3.20.20.540">
    <property type="entry name" value="Radical SAM ThiC family, central domain"/>
    <property type="match status" value="1"/>
</dbReference>
<dbReference type="HAMAP" id="MF_00089">
    <property type="entry name" value="ThiC"/>
    <property type="match status" value="1"/>
</dbReference>
<dbReference type="InterPro" id="IPR037509">
    <property type="entry name" value="ThiC"/>
</dbReference>
<dbReference type="InterPro" id="IPR025747">
    <property type="entry name" value="ThiC-associated_dom"/>
</dbReference>
<dbReference type="InterPro" id="IPR038521">
    <property type="entry name" value="ThiC/Bza_core_dom"/>
</dbReference>
<dbReference type="InterPro" id="IPR002817">
    <property type="entry name" value="ThiC/BzaA/B"/>
</dbReference>
<dbReference type="NCBIfam" id="NF006763">
    <property type="entry name" value="PRK09284.1"/>
    <property type="match status" value="1"/>
</dbReference>
<dbReference type="NCBIfam" id="NF009895">
    <property type="entry name" value="PRK13352.1"/>
    <property type="match status" value="1"/>
</dbReference>
<dbReference type="NCBIfam" id="TIGR00190">
    <property type="entry name" value="thiC"/>
    <property type="match status" value="1"/>
</dbReference>
<dbReference type="PANTHER" id="PTHR30557:SF1">
    <property type="entry name" value="PHOSPHOMETHYLPYRIMIDINE SYNTHASE, CHLOROPLASTIC"/>
    <property type="match status" value="1"/>
</dbReference>
<dbReference type="PANTHER" id="PTHR30557">
    <property type="entry name" value="THIAMINE BIOSYNTHESIS PROTEIN THIC"/>
    <property type="match status" value="1"/>
</dbReference>
<dbReference type="Pfam" id="PF13667">
    <property type="entry name" value="ThiC-associated"/>
    <property type="match status" value="1"/>
</dbReference>
<dbReference type="Pfam" id="PF01964">
    <property type="entry name" value="ThiC_Rad_SAM"/>
    <property type="match status" value="1"/>
</dbReference>
<dbReference type="SFLD" id="SFLDF00407">
    <property type="entry name" value="phosphomethylpyrimidine_syntha"/>
    <property type="match status" value="1"/>
</dbReference>
<dbReference type="SFLD" id="SFLDG01114">
    <property type="entry name" value="phosphomethylpyrimidine_syntha"/>
    <property type="match status" value="1"/>
</dbReference>
<dbReference type="SFLD" id="SFLDS00113">
    <property type="entry name" value="Radical_SAM_Phosphomethylpyrim"/>
    <property type="match status" value="1"/>
</dbReference>
<comment type="function">
    <text evidence="1">Catalyzes the synthesis of the hydroxymethylpyrimidine phosphate (HMP-P) moiety of thiamine from aminoimidazole ribotide (AIR) in a radical S-adenosyl-L-methionine (SAM)-dependent reaction.</text>
</comment>
<comment type="catalytic activity">
    <reaction evidence="1">
        <text>5-amino-1-(5-phospho-beta-D-ribosyl)imidazole + S-adenosyl-L-methionine = 4-amino-2-methyl-5-(phosphooxymethyl)pyrimidine + CO + 5'-deoxyadenosine + formate + L-methionine + 3 H(+)</text>
        <dbReference type="Rhea" id="RHEA:24840"/>
        <dbReference type="ChEBI" id="CHEBI:15378"/>
        <dbReference type="ChEBI" id="CHEBI:15740"/>
        <dbReference type="ChEBI" id="CHEBI:17245"/>
        <dbReference type="ChEBI" id="CHEBI:17319"/>
        <dbReference type="ChEBI" id="CHEBI:57844"/>
        <dbReference type="ChEBI" id="CHEBI:58354"/>
        <dbReference type="ChEBI" id="CHEBI:59789"/>
        <dbReference type="ChEBI" id="CHEBI:137981"/>
        <dbReference type="EC" id="4.1.99.17"/>
    </reaction>
</comment>
<comment type="cofactor">
    <cofactor evidence="1">
        <name>[4Fe-4S] cluster</name>
        <dbReference type="ChEBI" id="CHEBI:49883"/>
    </cofactor>
    <text evidence="1">Binds 1 [4Fe-4S] cluster per subunit. The cluster is coordinated with 3 cysteines and an exchangeable S-adenosyl-L-methionine.</text>
</comment>
<comment type="pathway">
    <text evidence="1">Cofactor biosynthesis; thiamine diphosphate biosynthesis.</text>
</comment>
<comment type="subunit">
    <text evidence="1">Homodimer.</text>
</comment>
<comment type="similarity">
    <text evidence="1">Belongs to the ThiC family.</text>
</comment>
<reference key="1">
    <citation type="journal article" date="2005" name="Nucleic Acids Res.">
        <title>Genome dynamics and diversity of Shigella species, the etiologic agents of bacillary dysentery.</title>
        <authorList>
            <person name="Yang F."/>
            <person name="Yang J."/>
            <person name="Zhang X."/>
            <person name="Chen L."/>
            <person name="Jiang Y."/>
            <person name="Yan Y."/>
            <person name="Tang X."/>
            <person name="Wang J."/>
            <person name="Xiong Z."/>
            <person name="Dong J."/>
            <person name="Xue Y."/>
            <person name="Zhu Y."/>
            <person name="Xu X."/>
            <person name="Sun L."/>
            <person name="Chen S."/>
            <person name="Nie H."/>
            <person name="Peng J."/>
            <person name="Xu J."/>
            <person name="Wang Y."/>
            <person name="Yuan Z."/>
            <person name="Wen Y."/>
            <person name="Yao Z."/>
            <person name="Shen Y."/>
            <person name="Qiang B."/>
            <person name="Hou Y."/>
            <person name="Yu J."/>
            <person name="Jin Q."/>
        </authorList>
    </citation>
    <scope>NUCLEOTIDE SEQUENCE [LARGE SCALE GENOMIC DNA]</scope>
    <source>
        <strain>Sb227</strain>
    </source>
</reference>
<gene>
    <name evidence="1" type="primary">thiC</name>
    <name type="ordered locus">SBO_4015</name>
</gene>
<name>THIC_SHIBS</name>
<sequence>MSATKLTRREQRARAQHFIDTLEGTAFPNSKRIYLTGTHSGVRVPMREIQLSPTLIGGSKEQPQFEENEAIPVYDTSGPYGDPQIAINVQQGLAKLRQPWIDARGDTEELTVRSSDYTKARLADDGLDELRFSGVLTPKRAKAGRRVTQLHYARQGIITPEMEFIAIRENMGRERIRSEVLRHQHPGMSFGARLPENITAEFVRDEVAAGRAIIPANINHPESEPMIIGRNFLVKVNANIGNSAVTSSIEEEVEKLVWSTRWGADTVMDLSTGRYIHETREWILRNSPVPIGTVPIYQALEKVNGIAEDLTWEAFRDTLLEQAEQGVDYFTIHAGVLLRYVPMTAKRLTGIVSRGGSIMAKWCLSHHQENFLYQHFREICEICAAYDVSLSLGDGLRPGSIQDANDEAQFAELHTLGELTKIAWEYDVQVMIEGPGHVPMQMIRRNMTEELEHCHEAPFYTLGPLTTDIAPGYDHFTSGIGAAMIGWFGCAMLCYVTPKEHLGLPNKEDVKQGLITYKIAAHAADLAKGHPGAQIRDNAMSKARFEFRWEDQFNLALDPFTARAYHDETLPQESGKVAHFCSMCGPKFCSMKISQEVRDYAATQTIEMGMADMSENFRARGGEIYLRKEEA</sequence>
<evidence type="ECO:0000255" key="1">
    <source>
        <dbReference type="HAMAP-Rule" id="MF_00089"/>
    </source>
</evidence>